<dbReference type="EC" id="2.7.7.8" evidence="1"/>
<dbReference type="EMBL" id="CP001252">
    <property type="protein sequence ID" value="ACK45648.1"/>
    <property type="molecule type" value="Genomic_DNA"/>
</dbReference>
<dbReference type="RefSeq" id="WP_012587034.1">
    <property type="nucleotide sequence ID" value="NC_011663.1"/>
</dbReference>
<dbReference type="SMR" id="B8E6N7"/>
<dbReference type="KEGG" id="sbp:Sbal223_1133"/>
<dbReference type="HOGENOM" id="CLU_004217_2_2_6"/>
<dbReference type="Proteomes" id="UP000002507">
    <property type="component" value="Chromosome"/>
</dbReference>
<dbReference type="GO" id="GO:0005829">
    <property type="term" value="C:cytosol"/>
    <property type="evidence" value="ECO:0007669"/>
    <property type="project" value="TreeGrafter"/>
</dbReference>
<dbReference type="GO" id="GO:0000175">
    <property type="term" value="F:3'-5'-RNA exonuclease activity"/>
    <property type="evidence" value="ECO:0007669"/>
    <property type="project" value="TreeGrafter"/>
</dbReference>
<dbReference type="GO" id="GO:0000287">
    <property type="term" value="F:magnesium ion binding"/>
    <property type="evidence" value="ECO:0007669"/>
    <property type="project" value="UniProtKB-UniRule"/>
</dbReference>
<dbReference type="GO" id="GO:0004654">
    <property type="term" value="F:polyribonucleotide nucleotidyltransferase activity"/>
    <property type="evidence" value="ECO:0007669"/>
    <property type="project" value="UniProtKB-UniRule"/>
</dbReference>
<dbReference type="GO" id="GO:0003723">
    <property type="term" value="F:RNA binding"/>
    <property type="evidence" value="ECO:0007669"/>
    <property type="project" value="UniProtKB-UniRule"/>
</dbReference>
<dbReference type="GO" id="GO:0006402">
    <property type="term" value="P:mRNA catabolic process"/>
    <property type="evidence" value="ECO:0007669"/>
    <property type="project" value="UniProtKB-UniRule"/>
</dbReference>
<dbReference type="GO" id="GO:0006396">
    <property type="term" value="P:RNA processing"/>
    <property type="evidence" value="ECO:0007669"/>
    <property type="project" value="InterPro"/>
</dbReference>
<dbReference type="CDD" id="cd02393">
    <property type="entry name" value="KH-I_PNPase"/>
    <property type="match status" value="1"/>
</dbReference>
<dbReference type="CDD" id="cd11363">
    <property type="entry name" value="RNase_PH_PNPase_1"/>
    <property type="match status" value="1"/>
</dbReference>
<dbReference type="CDD" id="cd11364">
    <property type="entry name" value="RNase_PH_PNPase_2"/>
    <property type="match status" value="1"/>
</dbReference>
<dbReference type="CDD" id="cd04472">
    <property type="entry name" value="S1_PNPase"/>
    <property type="match status" value="1"/>
</dbReference>
<dbReference type="FunFam" id="2.40.50.140:FF:000023">
    <property type="entry name" value="Polyribonucleotide nucleotidyltransferase"/>
    <property type="match status" value="1"/>
</dbReference>
<dbReference type="FunFam" id="3.30.1370.10:FF:000001">
    <property type="entry name" value="Polyribonucleotide nucleotidyltransferase"/>
    <property type="match status" value="1"/>
</dbReference>
<dbReference type="FunFam" id="3.30.230.70:FF:000001">
    <property type="entry name" value="Polyribonucleotide nucleotidyltransferase"/>
    <property type="match status" value="1"/>
</dbReference>
<dbReference type="FunFam" id="3.30.230.70:FF:000002">
    <property type="entry name" value="Polyribonucleotide nucleotidyltransferase"/>
    <property type="match status" value="1"/>
</dbReference>
<dbReference type="Gene3D" id="3.30.230.70">
    <property type="entry name" value="GHMP Kinase, N-terminal domain"/>
    <property type="match status" value="2"/>
</dbReference>
<dbReference type="Gene3D" id="3.30.1370.10">
    <property type="entry name" value="K Homology domain, type 1"/>
    <property type="match status" value="1"/>
</dbReference>
<dbReference type="Gene3D" id="2.40.50.140">
    <property type="entry name" value="Nucleic acid-binding proteins"/>
    <property type="match status" value="1"/>
</dbReference>
<dbReference type="HAMAP" id="MF_01595">
    <property type="entry name" value="PNPase"/>
    <property type="match status" value="1"/>
</dbReference>
<dbReference type="InterPro" id="IPR001247">
    <property type="entry name" value="ExoRNase_PH_dom1"/>
</dbReference>
<dbReference type="InterPro" id="IPR015847">
    <property type="entry name" value="ExoRNase_PH_dom2"/>
</dbReference>
<dbReference type="InterPro" id="IPR036345">
    <property type="entry name" value="ExoRNase_PH_dom2_sf"/>
</dbReference>
<dbReference type="InterPro" id="IPR004087">
    <property type="entry name" value="KH_dom"/>
</dbReference>
<dbReference type="InterPro" id="IPR004088">
    <property type="entry name" value="KH_dom_type_1"/>
</dbReference>
<dbReference type="InterPro" id="IPR036612">
    <property type="entry name" value="KH_dom_type_1_sf"/>
</dbReference>
<dbReference type="InterPro" id="IPR012340">
    <property type="entry name" value="NA-bd_OB-fold"/>
</dbReference>
<dbReference type="InterPro" id="IPR012162">
    <property type="entry name" value="PNPase"/>
</dbReference>
<dbReference type="InterPro" id="IPR027408">
    <property type="entry name" value="PNPase/RNase_PH_dom_sf"/>
</dbReference>
<dbReference type="InterPro" id="IPR015848">
    <property type="entry name" value="PNPase_PH_RNA-bd_bac/org-type"/>
</dbReference>
<dbReference type="InterPro" id="IPR036456">
    <property type="entry name" value="PNPase_PH_RNA-bd_sf"/>
</dbReference>
<dbReference type="InterPro" id="IPR020568">
    <property type="entry name" value="Ribosomal_Su5_D2-typ_SF"/>
</dbReference>
<dbReference type="InterPro" id="IPR003029">
    <property type="entry name" value="S1_domain"/>
</dbReference>
<dbReference type="NCBIfam" id="TIGR03591">
    <property type="entry name" value="polynuc_phos"/>
    <property type="match status" value="1"/>
</dbReference>
<dbReference type="NCBIfam" id="NF008805">
    <property type="entry name" value="PRK11824.1"/>
    <property type="match status" value="1"/>
</dbReference>
<dbReference type="PANTHER" id="PTHR11252">
    <property type="entry name" value="POLYRIBONUCLEOTIDE NUCLEOTIDYLTRANSFERASE"/>
    <property type="match status" value="1"/>
</dbReference>
<dbReference type="PANTHER" id="PTHR11252:SF0">
    <property type="entry name" value="POLYRIBONUCLEOTIDE NUCLEOTIDYLTRANSFERASE 1, MITOCHONDRIAL"/>
    <property type="match status" value="1"/>
</dbReference>
<dbReference type="Pfam" id="PF00013">
    <property type="entry name" value="KH_1"/>
    <property type="match status" value="1"/>
</dbReference>
<dbReference type="Pfam" id="PF03726">
    <property type="entry name" value="PNPase"/>
    <property type="match status" value="1"/>
</dbReference>
<dbReference type="Pfam" id="PF01138">
    <property type="entry name" value="RNase_PH"/>
    <property type="match status" value="2"/>
</dbReference>
<dbReference type="Pfam" id="PF03725">
    <property type="entry name" value="RNase_PH_C"/>
    <property type="match status" value="2"/>
</dbReference>
<dbReference type="Pfam" id="PF00575">
    <property type="entry name" value="S1"/>
    <property type="match status" value="1"/>
</dbReference>
<dbReference type="PIRSF" id="PIRSF005499">
    <property type="entry name" value="PNPase"/>
    <property type="match status" value="1"/>
</dbReference>
<dbReference type="SMART" id="SM00322">
    <property type="entry name" value="KH"/>
    <property type="match status" value="1"/>
</dbReference>
<dbReference type="SMART" id="SM00316">
    <property type="entry name" value="S1"/>
    <property type="match status" value="1"/>
</dbReference>
<dbReference type="SUPFAM" id="SSF54791">
    <property type="entry name" value="Eukaryotic type KH-domain (KH-domain type I)"/>
    <property type="match status" value="1"/>
</dbReference>
<dbReference type="SUPFAM" id="SSF50249">
    <property type="entry name" value="Nucleic acid-binding proteins"/>
    <property type="match status" value="1"/>
</dbReference>
<dbReference type="SUPFAM" id="SSF46915">
    <property type="entry name" value="Polynucleotide phosphorylase/guanosine pentaphosphate synthase (PNPase/GPSI), domain 3"/>
    <property type="match status" value="1"/>
</dbReference>
<dbReference type="SUPFAM" id="SSF55666">
    <property type="entry name" value="Ribonuclease PH domain 2-like"/>
    <property type="match status" value="2"/>
</dbReference>
<dbReference type="SUPFAM" id="SSF54211">
    <property type="entry name" value="Ribosomal protein S5 domain 2-like"/>
    <property type="match status" value="2"/>
</dbReference>
<dbReference type="PROSITE" id="PS50084">
    <property type="entry name" value="KH_TYPE_1"/>
    <property type="match status" value="1"/>
</dbReference>
<dbReference type="PROSITE" id="PS50126">
    <property type="entry name" value="S1"/>
    <property type="match status" value="1"/>
</dbReference>
<protein>
    <recommendedName>
        <fullName evidence="1">Polyribonucleotide nucleotidyltransferase</fullName>
        <ecNumber evidence="1">2.7.7.8</ecNumber>
    </recommendedName>
    <alternativeName>
        <fullName evidence="1">Polynucleotide phosphorylase</fullName>
        <shortName evidence="1">PNPase</shortName>
    </alternativeName>
</protein>
<name>PNP_SHEB2</name>
<feature type="chain" id="PRO_1000185750" description="Polyribonucleotide nucleotidyltransferase">
    <location>
        <begin position="1"/>
        <end position="699"/>
    </location>
</feature>
<feature type="domain" description="KH" evidence="1">
    <location>
        <begin position="552"/>
        <end position="611"/>
    </location>
</feature>
<feature type="domain" description="S1 motif" evidence="1">
    <location>
        <begin position="621"/>
        <end position="689"/>
    </location>
</feature>
<feature type="binding site" evidence="1">
    <location>
        <position position="485"/>
    </location>
    <ligand>
        <name>Mg(2+)</name>
        <dbReference type="ChEBI" id="CHEBI:18420"/>
    </ligand>
</feature>
<feature type="binding site" evidence="1">
    <location>
        <position position="491"/>
    </location>
    <ligand>
        <name>Mg(2+)</name>
        <dbReference type="ChEBI" id="CHEBI:18420"/>
    </ligand>
</feature>
<sequence length="699" mass="75255">MNPIVKSFEYGQHTVTLETGVIARQADAAVLASMGDTTVLVTVVGKKEADAGRDFFPLTVNYQEKTYAAGKIPGGFFKREGRPSEDETLIARLIDRPIRPLFPNGFKNEVQVIITVVSVDPQIEPDIISMIGTSAALAISGIPFSGPLGAARVGYIDGEYVLNPSVAQLATSQLNLVVAGTAGAVLMVESEAQALPEEVMLGSVVYGHDQQQVVIKAIAEFKAEAGKPTWDWTAPTQDADLVAQIKELAEAGLGDAYKIQVKQDRYAQVSVVKAATKEALLASNPSIDLREVDNLLGSLEKKVVRGRIIRGEPRIDGREPDMIRALSVLAGVLPRTHGSALFTRGETQALVTCTLGTERDAQKIDSIMGERTNRFMLHYNFPPYSVGETGMVGSPKRREIGHGKLAWRGINAVMPSAAEFPYSVRVVSEITESNGSSSMASVCGTSLALMDAGVPIKTSVAGIAMGLVKEGDDFVVLSDILGDEDHLGDMDFKVAGTRDGITALQMDIKIEGITKEIMDIALQQAYGARVHILNVMDQAIGSHRDDISDHAPRITVIKINPEKIRDVIGKGGAVIRALTEETGTTIELEDDGTVKIASSNGEATKEAIRRIEEITSEVEVGRIYNGKVIRIVDFGAFVNILPGKDGLVHISQISDERVANVSDHLELNQEVAVKVMEVDRQGRVRLSIKEAQTKETAAE</sequence>
<gene>
    <name evidence="1" type="primary">pnp</name>
    <name type="ordered locus">Sbal223_1133</name>
</gene>
<comment type="function">
    <text evidence="1">Involved in mRNA degradation. Catalyzes the phosphorolysis of single-stranded polyribonucleotides processively in the 3'- to 5'-direction.</text>
</comment>
<comment type="catalytic activity">
    <reaction evidence="1">
        <text>RNA(n+1) + phosphate = RNA(n) + a ribonucleoside 5'-diphosphate</text>
        <dbReference type="Rhea" id="RHEA:22096"/>
        <dbReference type="Rhea" id="RHEA-COMP:14527"/>
        <dbReference type="Rhea" id="RHEA-COMP:17342"/>
        <dbReference type="ChEBI" id="CHEBI:43474"/>
        <dbReference type="ChEBI" id="CHEBI:57930"/>
        <dbReference type="ChEBI" id="CHEBI:140395"/>
        <dbReference type="EC" id="2.7.7.8"/>
    </reaction>
</comment>
<comment type="cofactor">
    <cofactor evidence="1">
        <name>Mg(2+)</name>
        <dbReference type="ChEBI" id="CHEBI:18420"/>
    </cofactor>
</comment>
<comment type="subunit">
    <text evidence="1">Component of the RNA degradosome, which is a multiprotein complex involved in RNA processing and mRNA degradation.</text>
</comment>
<comment type="subcellular location">
    <subcellularLocation>
        <location evidence="1">Cytoplasm</location>
    </subcellularLocation>
</comment>
<comment type="similarity">
    <text evidence="1">Belongs to the polyribonucleotide nucleotidyltransferase family.</text>
</comment>
<proteinExistence type="inferred from homology"/>
<accession>B8E6N7</accession>
<keyword id="KW-0963">Cytoplasm</keyword>
<keyword id="KW-0460">Magnesium</keyword>
<keyword id="KW-0479">Metal-binding</keyword>
<keyword id="KW-0548">Nucleotidyltransferase</keyword>
<keyword id="KW-0694">RNA-binding</keyword>
<keyword id="KW-0808">Transferase</keyword>
<organism>
    <name type="scientific">Shewanella baltica (strain OS223)</name>
    <dbReference type="NCBI Taxonomy" id="407976"/>
    <lineage>
        <taxon>Bacteria</taxon>
        <taxon>Pseudomonadati</taxon>
        <taxon>Pseudomonadota</taxon>
        <taxon>Gammaproteobacteria</taxon>
        <taxon>Alteromonadales</taxon>
        <taxon>Shewanellaceae</taxon>
        <taxon>Shewanella</taxon>
    </lineage>
</organism>
<reference key="1">
    <citation type="submission" date="2008-12" db="EMBL/GenBank/DDBJ databases">
        <title>Complete sequence of chromosome of Shewanella baltica OS223.</title>
        <authorList>
            <consortium name="US DOE Joint Genome Institute"/>
            <person name="Lucas S."/>
            <person name="Copeland A."/>
            <person name="Lapidus A."/>
            <person name="Glavina del Rio T."/>
            <person name="Dalin E."/>
            <person name="Tice H."/>
            <person name="Bruce D."/>
            <person name="Goodwin L."/>
            <person name="Pitluck S."/>
            <person name="Chertkov O."/>
            <person name="Meincke L."/>
            <person name="Brettin T."/>
            <person name="Detter J.C."/>
            <person name="Han C."/>
            <person name="Kuske C.R."/>
            <person name="Larimer F."/>
            <person name="Land M."/>
            <person name="Hauser L."/>
            <person name="Kyrpides N."/>
            <person name="Ovchinnikova G."/>
            <person name="Brettar I."/>
            <person name="Rodrigues J."/>
            <person name="Konstantinidis K."/>
            <person name="Tiedje J."/>
        </authorList>
    </citation>
    <scope>NUCLEOTIDE SEQUENCE [LARGE SCALE GENOMIC DNA]</scope>
    <source>
        <strain>OS223</strain>
    </source>
</reference>
<evidence type="ECO:0000255" key="1">
    <source>
        <dbReference type="HAMAP-Rule" id="MF_01595"/>
    </source>
</evidence>